<sequence length="278" mass="31341">MDVRQSVHSEHAKTLDTTELRKKFLIEQIFTPNQYTMTYSHIDRIVVGGIMPVDGEITFDDGIGKQFGVNYFLERRELGLINIGGPAKIVIDGTSYEVGNEEALYVGKGAKALAFSSLDSAKPAKLYYNSAPAHAVFPTRIITQDDAIKAPLGDVKTCNKRTICKYLVPEVVETCQLSMGLTRLAEGSNWNSMPTHTHERRMEVYFYFDMAEDTIIFHMMGEPHETRHLVMHNEQAVISPSWSIHTGVGTKNYAFIWGMIGENLTFDDMDHIAMLDLR</sequence>
<dbReference type="EC" id="5.3.1.17" evidence="1"/>
<dbReference type="EMBL" id="U17224">
    <property type="protein sequence ID" value="AAD38237.1"/>
    <property type="molecule type" value="Genomic_DNA"/>
</dbReference>
<dbReference type="RefSeq" id="WP_010299379.1">
    <property type="nucleotide sequence ID" value="NZ_QHMC01000009.1"/>
</dbReference>
<dbReference type="SMR" id="Q9XB53"/>
<dbReference type="GeneID" id="61346226"/>
<dbReference type="PATRIC" id="fig|555.17.peg.3319"/>
<dbReference type="UniPathway" id="UPA00545">
    <property type="reaction ID" value="UER00826"/>
</dbReference>
<dbReference type="GO" id="GO:0008697">
    <property type="term" value="F:4-deoxy-L-threo-5-hexosulose-uronate ketol-isomerase activity"/>
    <property type="evidence" value="ECO:0007669"/>
    <property type="project" value="UniProtKB-UniRule"/>
</dbReference>
<dbReference type="GO" id="GO:0008270">
    <property type="term" value="F:zinc ion binding"/>
    <property type="evidence" value="ECO:0007669"/>
    <property type="project" value="UniProtKB-UniRule"/>
</dbReference>
<dbReference type="GO" id="GO:0019698">
    <property type="term" value="P:D-galacturonate catabolic process"/>
    <property type="evidence" value="ECO:0007669"/>
    <property type="project" value="TreeGrafter"/>
</dbReference>
<dbReference type="GO" id="GO:0042840">
    <property type="term" value="P:D-glucuronate catabolic process"/>
    <property type="evidence" value="ECO:0007669"/>
    <property type="project" value="TreeGrafter"/>
</dbReference>
<dbReference type="GO" id="GO:0045490">
    <property type="term" value="P:pectin catabolic process"/>
    <property type="evidence" value="ECO:0007669"/>
    <property type="project" value="UniProtKB-UniRule"/>
</dbReference>
<dbReference type="CDD" id="cd20491">
    <property type="entry name" value="cupin_KduI_C"/>
    <property type="match status" value="1"/>
</dbReference>
<dbReference type="CDD" id="cd20294">
    <property type="entry name" value="cupin_KduI_N"/>
    <property type="match status" value="1"/>
</dbReference>
<dbReference type="Gene3D" id="2.60.120.10">
    <property type="entry name" value="Jelly Rolls"/>
    <property type="match status" value="1"/>
</dbReference>
<dbReference type="Gene3D" id="2.60.120.520">
    <property type="entry name" value="pectin degrading enzyme 5-keto 4- deoxyuronate isomerase, domain 1"/>
    <property type="match status" value="1"/>
</dbReference>
<dbReference type="HAMAP" id="MF_00687">
    <property type="entry name" value="KduI"/>
    <property type="match status" value="1"/>
</dbReference>
<dbReference type="InterPro" id="IPR007045">
    <property type="entry name" value="KduI"/>
</dbReference>
<dbReference type="InterPro" id="IPR021120">
    <property type="entry name" value="KduI/IolB_isomerase"/>
</dbReference>
<dbReference type="InterPro" id="IPR027449">
    <property type="entry name" value="KduI_N"/>
</dbReference>
<dbReference type="InterPro" id="IPR014710">
    <property type="entry name" value="RmlC-like_jellyroll"/>
</dbReference>
<dbReference type="InterPro" id="IPR011051">
    <property type="entry name" value="RmlC_Cupin_sf"/>
</dbReference>
<dbReference type="NCBIfam" id="NF002091">
    <property type="entry name" value="PRK00924.1"/>
    <property type="match status" value="1"/>
</dbReference>
<dbReference type="PANTHER" id="PTHR38461">
    <property type="entry name" value="4-DEOXY-L-THREO-5-HEXOSULOSE-URONATE KETOL-ISOMERASE"/>
    <property type="match status" value="1"/>
</dbReference>
<dbReference type="PANTHER" id="PTHR38461:SF1">
    <property type="entry name" value="4-DEOXY-L-THREO-5-HEXOSULOSE-URONATE KETOL-ISOMERASE"/>
    <property type="match status" value="1"/>
</dbReference>
<dbReference type="Pfam" id="PF04962">
    <property type="entry name" value="KduI"/>
    <property type="match status" value="1"/>
</dbReference>
<dbReference type="PIRSF" id="PIRSF006625">
    <property type="entry name" value="KduI"/>
    <property type="match status" value="1"/>
</dbReference>
<dbReference type="SUPFAM" id="SSF51182">
    <property type="entry name" value="RmlC-like cupins"/>
    <property type="match status" value="1"/>
</dbReference>
<comment type="function">
    <text evidence="1">Catalyzes the isomerization of 5-dehydro-4-deoxy-D-glucuronate to 3-deoxy-D-glycero-2,5-hexodiulosonate.</text>
</comment>
<comment type="catalytic activity">
    <reaction evidence="1">
        <text>5-dehydro-4-deoxy-D-glucuronate = 3-deoxy-D-glycero-2,5-hexodiulosonate</text>
        <dbReference type="Rhea" id="RHEA:23896"/>
        <dbReference type="ChEBI" id="CHEBI:17117"/>
        <dbReference type="ChEBI" id="CHEBI:29071"/>
        <dbReference type="EC" id="5.3.1.17"/>
    </reaction>
</comment>
<comment type="cofactor">
    <cofactor evidence="1">
        <name>Zn(2+)</name>
        <dbReference type="ChEBI" id="CHEBI:29105"/>
    </cofactor>
    <text evidence="1">Binds 1 zinc ion per subunit.</text>
</comment>
<comment type="pathway">
    <text evidence="1">Glycan metabolism; pectin degradation; 2-dehydro-3-deoxy-D-gluconate from pectin: step 4/5.</text>
</comment>
<comment type="similarity">
    <text evidence="1">Belongs to the KduI family.</text>
</comment>
<reference key="1">
    <citation type="submission" date="1999-06" db="EMBL/GenBank/DDBJ databases">
        <authorList>
            <person name="McGowan S.J."/>
        </authorList>
    </citation>
    <scope>NUCLEOTIDE SEQUENCE [GENOMIC DNA]</scope>
    <source>
        <strain>ATCC 39048 / GS101 / SC 12</strain>
    </source>
</reference>
<protein>
    <recommendedName>
        <fullName evidence="1">4-deoxy-L-threo-5-hexosulose-uronate ketol-isomerase</fullName>
        <ecNumber evidence="1">5.3.1.17</ecNumber>
    </recommendedName>
    <alternativeName>
        <fullName evidence="1">5-keto-4-deoxyuronate isomerase</fullName>
    </alternativeName>
    <alternativeName>
        <fullName evidence="1">DKI isomerase</fullName>
    </alternativeName>
</protein>
<gene>
    <name evidence="1" type="primary">kduI</name>
</gene>
<proteinExistence type="inferred from homology"/>
<name>KDUI_PECCC</name>
<evidence type="ECO:0000255" key="1">
    <source>
        <dbReference type="HAMAP-Rule" id="MF_00687"/>
    </source>
</evidence>
<feature type="chain" id="PRO_0000215490" description="4-deoxy-L-threo-5-hexosulose-uronate ketol-isomerase">
    <location>
        <begin position="1"/>
        <end position="278"/>
    </location>
</feature>
<feature type="binding site" evidence="1">
    <location>
        <position position="196"/>
    </location>
    <ligand>
        <name>Zn(2+)</name>
        <dbReference type="ChEBI" id="CHEBI:29105"/>
    </ligand>
</feature>
<feature type="binding site" evidence="1">
    <location>
        <position position="198"/>
    </location>
    <ligand>
        <name>Zn(2+)</name>
        <dbReference type="ChEBI" id="CHEBI:29105"/>
    </ligand>
</feature>
<feature type="binding site" evidence="1">
    <location>
        <position position="203"/>
    </location>
    <ligand>
        <name>Zn(2+)</name>
        <dbReference type="ChEBI" id="CHEBI:29105"/>
    </ligand>
</feature>
<feature type="binding site" evidence="1">
    <location>
        <position position="245"/>
    </location>
    <ligand>
        <name>Zn(2+)</name>
        <dbReference type="ChEBI" id="CHEBI:29105"/>
    </ligand>
</feature>
<accession>Q9XB53</accession>
<keyword id="KW-0413">Isomerase</keyword>
<keyword id="KW-0479">Metal-binding</keyword>
<keyword id="KW-0862">Zinc</keyword>
<organism>
    <name type="scientific">Pectobacterium carotovorum subsp. carotovorum</name>
    <name type="common">Erwinia carotovora subsp. carotovora</name>
    <dbReference type="NCBI Taxonomy" id="555"/>
    <lineage>
        <taxon>Bacteria</taxon>
        <taxon>Pseudomonadati</taxon>
        <taxon>Pseudomonadota</taxon>
        <taxon>Gammaproteobacteria</taxon>
        <taxon>Enterobacterales</taxon>
        <taxon>Pectobacteriaceae</taxon>
        <taxon>Pectobacterium</taxon>
    </lineage>
</organism>